<feature type="chain" id="PRO_0000419309" description="Growth-regulating factor 8">
    <location>
        <begin position="1"/>
        <end position="409"/>
    </location>
</feature>
<feature type="domain" description="QLQ" evidence="2">
    <location>
        <begin position="107"/>
        <end position="142"/>
    </location>
</feature>
<feature type="domain" description="WRC" evidence="3">
    <location>
        <begin position="158"/>
        <end position="202"/>
    </location>
</feature>
<feature type="region of interest" description="Disordered" evidence="4">
    <location>
        <begin position="1"/>
        <end position="81"/>
    </location>
</feature>
<feature type="region of interest" description="Disordered" evidence="4">
    <location>
        <begin position="221"/>
        <end position="242"/>
    </location>
</feature>
<feature type="short sequence motif" description="Bipartite nuclear localization signal" evidence="3">
    <location>
        <begin position="163"/>
        <end position="173"/>
    </location>
</feature>
<feature type="short sequence motif" description="Bipartite nuclear localization signal" evidence="3">
    <location>
        <begin position="191"/>
        <end position="198"/>
    </location>
</feature>
<feature type="compositionally biased region" description="Gly residues" evidence="4">
    <location>
        <begin position="1"/>
        <end position="10"/>
    </location>
</feature>
<feature type="compositionally biased region" description="Gly residues" evidence="4">
    <location>
        <begin position="27"/>
        <end position="36"/>
    </location>
</feature>
<feature type="compositionally biased region" description="Low complexity" evidence="4">
    <location>
        <begin position="56"/>
        <end position="68"/>
    </location>
</feature>
<feature type="splice variant" id="VSP_044147" description="In isoform 2." evidence="5">
    <location>
        <begin position="1"/>
        <end position="138"/>
    </location>
</feature>
<feature type="splice variant" id="VSP_044148" description="In isoform 2." evidence="5">
    <original>PIRRSLHPW</original>
    <variation>MKWAFYFAP</variation>
    <location>
        <begin position="139"/>
        <end position="147"/>
    </location>
</feature>
<proteinExistence type="evidence at transcript level"/>
<reference key="1">
    <citation type="journal article" date="2005" name="BMC Biol.">
        <title>The sequence of rice chromosomes 11 and 12, rich in disease resistance genes and recent gene duplications.</title>
        <authorList>
            <consortium name="The rice chromosomes 11 and 12 sequencing consortia"/>
        </authorList>
    </citation>
    <scope>NUCLEOTIDE SEQUENCE [LARGE SCALE GENOMIC DNA]</scope>
    <source>
        <strain>cv. Nipponbare</strain>
    </source>
</reference>
<reference key="2">
    <citation type="journal article" date="2005" name="Nature">
        <title>The map-based sequence of the rice genome.</title>
        <authorList>
            <consortium name="International rice genome sequencing project (IRGSP)"/>
        </authorList>
    </citation>
    <scope>NUCLEOTIDE SEQUENCE [LARGE SCALE GENOMIC DNA]</scope>
    <source>
        <strain>cv. Nipponbare</strain>
    </source>
</reference>
<reference key="3">
    <citation type="journal article" date="2008" name="Nucleic Acids Res.">
        <title>The rice annotation project database (RAP-DB): 2008 update.</title>
        <authorList>
            <consortium name="The rice annotation project (RAP)"/>
        </authorList>
    </citation>
    <scope>GENOME REANNOTATION</scope>
    <source>
        <strain>cv. Nipponbare</strain>
    </source>
</reference>
<reference key="4">
    <citation type="journal article" date="2013" name="Rice">
        <title>Improvement of the Oryza sativa Nipponbare reference genome using next generation sequence and optical map data.</title>
        <authorList>
            <person name="Kawahara Y."/>
            <person name="de la Bastide M."/>
            <person name="Hamilton J.P."/>
            <person name="Kanamori H."/>
            <person name="McCombie W.R."/>
            <person name="Ouyang S."/>
            <person name="Schwartz D.C."/>
            <person name="Tanaka T."/>
            <person name="Wu J."/>
            <person name="Zhou S."/>
            <person name="Childs K.L."/>
            <person name="Davidson R.M."/>
            <person name="Lin H."/>
            <person name="Quesada-Ocampo L."/>
            <person name="Vaillancourt B."/>
            <person name="Sakai H."/>
            <person name="Lee S.S."/>
            <person name="Kim J."/>
            <person name="Numa H."/>
            <person name="Itoh T."/>
            <person name="Buell C.R."/>
            <person name="Matsumoto T."/>
        </authorList>
    </citation>
    <scope>GENOME REANNOTATION</scope>
    <source>
        <strain>cv. Nipponbare</strain>
    </source>
</reference>
<reference key="5">
    <citation type="journal article" date="2003" name="Science">
        <title>Collection, mapping, and annotation of over 28,000 cDNA clones from japonica rice.</title>
        <authorList>
            <consortium name="The rice full-length cDNA consortium"/>
        </authorList>
    </citation>
    <scope>NUCLEOTIDE SEQUENCE [LARGE SCALE MRNA] (ISOFORM 2)</scope>
    <source>
        <strain>cv. Nipponbare</strain>
    </source>
</reference>
<reference key="6">
    <citation type="journal article" date="2004" name="Plant Cell Physiol.">
        <title>Whole genome analysis of the OsGRF gene family encoding plant-specific putative transcription activators in rice (Oryza sativa L.).</title>
        <authorList>
            <person name="Choi D."/>
            <person name="Kim J.H."/>
            <person name="Kende H."/>
        </authorList>
    </citation>
    <scope>IDENTIFICATION (ISOFORM 1)</scope>
    <scope>GENE FAMILY</scope>
    <source>
        <strain>cv. Nipponbare</strain>
    </source>
</reference>
<evidence type="ECO:0000250" key="1"/>
<evidence type="ECO:0000255" key="2">
    <source>
        <dbReference type="PROSITE-ProRule" id="PRU01001"/>
    </source>
</evidence>
<evidence type="ECO:0000255" key="3">
    <source>
        <dbReference type="PROSITE-ProRule" id="PRU01002"/>
    </source>
</evidence>
<evidence type="ECO:0000256" key="4">
    <source>
        <dbReference type="SAM" id="MobiDB-lite"/>
    </source>
</evidence>
<evidence type="ECO:0000303" key="5">
    <source>
    </source>
</evidence>
<evidence type="ECO:0000305" key="6"/>
<protein>
    <recommendedName>
        <fullName>Growth-regulating factor 8</fullName>
        <shortName>OsGRF8</shortName>
    </recommendedName>
    <alternativeName>
        <fullName>Transcription activator GRF8</fullName>
    </alternativeName>
</protein>
<accession>Q6AWY1</accession>
<accession>B7EU12</accession>
<accession>Q2R2Q3</accession>
<gene>
    <name type="primary">GRF8</name>
    <name type="ordered locus">Os11g0551900</name>
    <name type="ordered locus">LOC_Os11g35030</name>
</gene>
<organism>
    <name type="scientific">Oryza sativa subsp. japonica</name>
    <name type="common">Rice</name>
    <dbReference type="NCBI Taxonomy" id="39947"/>
    <lineage>
        <taxon>Eukaryota</taxon>
        <taxon>Viridiplantae</taxon>
        <taxon>Streptophyta</taxon>
        <taxon>Embryophyta</taxon>
        <taxon>Tracheophyta</taxon>
        <taxon>Spermatophyta</taxon>
        <taxon>Magnoliopsida</taxon>
        <taxon>Liliopsida</taxon>
        <taxon>Poales</taxon>
        <taxon>Poaceae</taxon>
        <taxon>BOP clade</taxon>
        <taxon>Oryzoideae</taxon>
        <taxon>Oryzeae</taxon>
        <taxon>Oryzinae</taxon>
        <taxon>Oryza</taxon>
        <taxon>Oryza sativa</taxon>
    </lineage>
</organism>
<dbReference type="EMBL" id="DP000010">
    <property type="protein sequence ID" value="ABA94244.2"/>
    <property type="molecule type" value="Genomic_DNA"/>
</dbReference>
<dbReference type="EMBL" id="DP000010">
    <property type="protein sequence ID" value="ABG22524.1"/>
    <property type="molecule type" value="Genomic_DNA"/>
</dbReference>
<dbReference type="EMBL" id="AP008217">
    <property type="protein sequence ID" value="BAF28444.1"/>
    <property type="molecule type" value="Genomic_DNA"/>
</dbReference>
<dbReference type="EMBL" id="AP014967">
    <property type="status" value="NOT_ANNOTATED_CDS"/>
    <property type="molecule type" value="Genomic_DNA"/>
</dbReference>
<dbReference type="EMBL" id="AK103055">
    <property type="protein sequence ID" value="BAG95859.1"/>
    <property type="molecule type" value="mRNA"/>
</dbReference>
<dbReference type="EMBL" id="BK004863">
    <property type="protein sequence ID" value="DAA05212.1"/>
    <property type="molecule type" value="Genomic_DNA"/>
</dbReference>
<dbReference type="RefSeq" id="XP_015615703.1">
    <property type="nucleotide sequence ID" value="XM_015760217.1"/>
</dbReference>
<dbReference type="FunCoup" id="Q6AWY1">
    <property type="interactions" value="764"/>
</dbReference>
<dbReference type="PaxDb" id="39947-Q6AWY1"/>
<dbReference type="EnsemblPlants" id="Os11t0551900-02">
    <molecule id="Q6AWY1-1"/>
    <property type="protein sequence ID" value="Os11t0551900-02"/>
    <property type="gene ID" value="Os11g0551900"/>
</dbReference>
<dbReference type="Gramene" id="Os11t0551900-02">
    <molecule id="Q6AWY1-1"/>
    <property type="protein sequence ID" value="Os11t0551900-02"/>
    <property type="gene ID" value="Os11g0551900"/>
</dbReference>
<dbReference type="KEGG" id="dosa:Os11g0551900"/>
<dbReference type="eggNOG" id="ENOG502QRK7">
    <property type="taxonomic scope" value="Eukaryota"/>
</dbReference>
<dbReference type="HOGENOM" id="CLU_1689628_0_0_1"/>
<dbReference type="InParanoid" id="Q6AWY1"/>
<dbReference type="OrthoDB" id="1927209at2759"/>
<dbReference type="Proteomes" id="UP000000763">
    <property type="component" value="Chromosome 11"/>
</dbReference>
<dbReference type="Proteomes" id="UP000059680">
    <property type="component" value="Chromosome 11"/>
</dbReference>
<dbReference type="GO" id="GO:0005634">
    <property type="term" value="C:nucleus"/>
    <property type="evidence" value="ECO:0007669"/>
    <property type="project" value="UniProtKB-SubCell"/>
</dbReference>
<dbReference type="GO" id="GO:0005524">
    <property type="term" value="F:ATP binding"/>
    <property type="evidence" value="ECO:0007669"/>
    <property type="project" value="InterPro"/>
</dbReference>
<dbReference type="GO" id="GO:0032502">
    <property type="term" value="P:developmental process"/>
    <property type="evidence" value="ECO:0007669"/>
    <property type="project" value="InterPro"/>
</dbReference>
<dbReference type="GO" id="GO:0006351">
    <property type="term" value="P:DNA-templated transcription"/>
    <property type="evidence" value="ECO:0007669"/>
    <property type="project" value="InterPro"/>
</dbReference>
<dbReference type="GO" id="GO:0006355">
    <property type="term" value="P:regulation of DNA-templated transcription"/>
    <property type="evidence" value="ECO:0007669"/>
    <property type="project" value="InterPro"/>
</dbReference>
<dbReference type="InterPro" id="IPR014978">
    <property type="entry name" value="Gln-Leu-Gln_QLQ"/>
</dbReference>
<dbReference type="InterPro" id="IPR031137">
    <property type="entry name" value="GRF"/>
</dbReference>
<dbReference type="InterPro" id="IPR014977">
    <property type="entry name" value="WRC_dom"/>
</dbReference>
<dbReference type="PANTHER" id="PTHR31602">
    <property type="entry name" value="GROWTH-REGULATING FACTOR 5"/>
    <property type="match status" value="1"/>
</dbReference>
<dbReference type="PANTHER" id="PTHR31602:SF102">
    <property type="entry name" value="GROWTH-REGULATING FACTOR 7"/>
    <property type="match status" value="1"/>
</dbReference>
<dbReference type="Pfam" id="PF08880">
    <property type="entry name" value="QLQ"/>
    <property type="match status" value="1"/>
</dbReference>
<dbReference type="Pfam" id="PF08879">
    <property type="entry name" value="WRC"/>
    <property type="match status" value="1"/>
</dbReference>
<dbReference type="SMART" id="SM00951">
    <property type="entry name" value="QLQ"/>
    <property type="match status" value="1"/>
</dbReference>
<dbReference type="PROSITE" id="PS51666">
    <property type="entry name" value="QLQ"/>
    <property type="match status" value="1"/>
</dbReference>
<dbReference type="PROSITE" id="PS51667">
    <property type="entry name" value="WRC"/>
    <property type="match status" value="1"/>
</dbReference>
<name>GRF8_ORYSJ</name>
<sequence length="409" mass="43897">MLSSCGGHGHGNPRSLQEEHHGRCGEQQGGGGGGGQEQEQDGFLVREARASPPSPSSSSFLGSTSSSCSGGGGGGQMLSFSSPNGTAGLGLSSGGSMQGVLARVRGPFTPTQWMELEHQALIYKHIAANVSVPSSLLLPIRRSLHPWGWGSFPPGCADVEPRRCRRTDGKKWRCSRDAVGDQKYCERHINRGRHRSRKHVEGRKATLTIAEPSTVIAAGVSSRGHTVARQKQVKGSAATVSDPFSRQSNRKFLEKQNVVDQLSPMDSFDFSSTQSSPNYDNVALSPLKLHHDHDESYIGHGAGSSSEKGSMMYESRLTVSKETLDDGPLGEVFKRKNCQSASTEILTEKWTENPNLHCPSGILQMATKFNSISSGNTVNSGGTAVENLITDNGYLTARMMNPHIVPTLL</sequence>
<keyword id="KW-0010">Activator</keyword>
<keyword id="KW-0025">Alternative splicing</keyword>
<keyword id="KW-0539">Nucleus</keyword>
<keyword id="KW-1185">Reference proteome</keyword>
<keyword id="KW-0804">Transcription</keyword>
<keyword id="KW-0805">Transcription regulation</keyword>
<comment type="function">
    <text evidence="1">Transcription activator that plays a regulatory role in gibberellin-induced stem elongation.</text>
</comment>
<comment type="subcellular location">
    <subcellularLocation>
        <location evidence="3">Nucleus</location>
    </subcellularLocation>
</comment>
<comment type="alternative products">
    <event type="alternative splicing"/>
    <isoform>
        <id>Q6AWY1-1</id>
        <name>1</name>
        <sequence type="displayed"/>
    </isoform>
    <isoform>
        <id>Q6AWY1-2</id>
        <name>2</name>
        <sequence type="described" ref="VSP_044147 VSP_044148"/>
    </isoform>
</comment>
<comment type="domain">
    <text>The QLQ domain and WRC domain may be involved in protein-protein interaction and DNA-binding, respectively.</text>
</comment>
<comment type="miscellaneous">
    <molecule>Isoform 2</molecule>
    <text evidence="6">May be due to an intron retention.</text>
</comment>
<comment type="similarity">
    <text evidence="6">Belongs to the GRF family.</text>
</comment>